<organism>
    <name type="scientific">Pseudoderopeltis foveolata</name>
    <name type="common">Cockroach</name>
    <dbReference type="NCBI Taxonomy" id="303879"/>
    <lineage>
        <taxon>Eukaryota</taxon>
        <taxon>Metazoa</taxon>
        <taxon>Ecdysozoa</taxon>
        <taxon>Arthropoda</taxon>
        <taxon>Hexapoda</taxon>
        <taxon>Insecta</taxon>
        <taxon>Pterygota</taxon>
        <taxon>Neoptera</taxon>
        <taxon>Polyneoptera</taxon>
        <taxon>Dictyoptera</taxon>
        <taxon>Blattodea</taxon>
        <taxon>Blattoidea</taxon>
        <taxon>Blattidae</taxon>
        <taxon>Blattinae</taxon>
        <taxon>Pseudoderopeltis</taxon>
    </lineage>
</organism>
<accession>P84371</accession>
<comment type="function">
    <text evidence="1">Myoactive.</text>
</comment>
<comment type="subcellular location">
    <subcellularLocation>
        <location evidence="4">Secreted</location>
    </subcellularLocation>
</comment>
<comment type="tissue specificity">
    <text evidence="4">Expressed in the brain, subesophageal ganglion and in the retrocerebral complex (mainly corpora allata).</text>
</comment>
<comment type="mass spectrometry"/>
<comment type="similarity">
    <text evidence="2">Belongs to the pyrokinin family.</text>
</comment>
<dbReference type="GO" id="GO:0005576">
    <property type="term" value="C:extracellular region"/>
    <property type="evidence" value="ECO:0007669"/>
    <property type="project" value="UniProtKB-SubCell"/>
</dbReference>
<dbReference type="GO" id="GO:0005184">
    <property type="term" value="F:neuropeptide hormone activity"/>
    <property type="evidence" value="ECO:0007669"/>
    <property type="project" value="InterPro"/>
</dbReference>
<dbReference type="GO" id="GO:0007218">
    <property type="term" value="P:neuropeptide signaling pathway"/>
    <property type="evidence" value="ECO:0007669"/>
    <property type="project" value="UniProtKB-KW"/>
</dbReference>
<dbReference type="InterPro" id="IPR001484">
    <property type="entry name" value="Pyrokinin_CS"/>
</dbReference>
<dbReference type="PROSITE" id="PS00539">
    <property type="entry name" value="PYROKININ"/>
    <property type="match status" value="1"/>
</dbReference>
<keyword id="KW-0027">Amidation</keyword>
<keyword id="KW-0903">Direct protein sequencing</keyword>
<keyword id="KW-0527">Neuropeptide</keyword>
<keyword id="KW-0964">Secreted</keyword>
<protein>
    <recommendedName>
        <fullName>Pyrokinin-6</fullName>
        <shortName>Psefo-PK-6</shortName>
    </recommendedName>
    <alternativeName>
        <fullName>FXPRL-amide</fullName>
    </alternativeName>
</protein>
<evidence type="ECO:0000250" key="1">
    <source>
        <dbReference type="UniProtKB" id="P82693"/>
    </source>
</evidence>
<evidence type="ECO:0000255" key="2"/>
<evidence type="ECO:0000269" key="3">
    <source>
    </source>
</evidence>
<evidence type="ECO:0000269" key="4">
    <source ref="2"/>
</evidence>
<evidence type="ECO:0000305" key="5"/>
<sequence>SDPEAPGIWFGPRL</sequence>
<feature type="peptide" id="PRO_0000044364" description="Pyrokinin-6">
    <location>
        <begin position="1"/>
        <end position="14"/>
    </location>
</feature>
<feature type="modified residue" description="Leucine amide" evidence="3">
    <location>
        <position position="14"/>
    </location>
</feature>
<name>PPK6_PSEFO</name>
<reference evidence="5" key="1">
    <citation type="journal article" date="2005" name="Peptides">
        <title>Peptidomics of neurohemal organs from species of the cockroach family Blattidae: how do neuropeptides of closely related species differ?</title>
        <authorList>
            <person name="Predel R."/>
            <person name="Gaede G."/>
        </authorList>
    </citation>
    <scope>PROTEIN SEQUENCE</scope>
    <scope>MASS SPECTROMETRY</scope>
    <scope>AMIDATION AT LEU-14</scope>
    <source>
        <tissue evidence="3">Corpora allata</tissue>
    </source>
</reference>
<reference evidence="5" key="2">
    <citation type="submission" date="2004-11" db="UniProtKB">
        <authorList>
            <person name="Predel R."/>
            <person name="Gaede G."/>
        </authorList>
    </citation>
    <scope>SUBCELLULAR LOCATION</scope>
    <scope>TISSUE SPECIFICITY</scope>
</reference>
<proteinExistence type="evidence at protein level"/>